<accession>Q6GHK3</accession>
<organism>
    <name type="scientific">Staphylococcus aureus (strain MRSA252)</name>
    <dbReference type="NCBI Taxonomy" id="282458"/>
    <lineage>
        <taxon>Bacteria</taxon>
        <taxon>Bacillati</taxon>
        <taxon>Bacillota</taxon>
        <taxon>Bacilli</taxon>
        <taxon>Bacillales</taxon>
        <taxon>Staphylococcaceae</taxon>
        <taxon>Staphylococcus</taxon>
    </lineage>
</organism>
<comment type="function">
    <text evidence="1">Carrier of the growing fatty acid chain in fatty acid biosynthesis.</text>
</comment>
<comment type="pathway">
    <text evidence="1">Lipid metabolism; fatty acid biosynthesis.</text>
</comment>
<comment type="subcellular location">
    <subcellularLocation>
        <location evidence="1">Cytoplasm</location>
    </subcellularLocation>
</comment>
<comment type="PTM">
    <text evidence="1">4'-phosphopantetheine is transferred from CoA to a specific serine of apo-ACP by AcpS. This modification is essential for activity because fatty acids are bound in thioester linkage to the sulfhydryl of the prosthetic group.</text>
</comment>
<comment type="similarity">
    <text evidence="1">Belongs to the acyl carrier protein (ACP) family.</text>
</comment>
<evidence type="ECO:0000255" key="1">
    <source>
        <dbReference type="HAMAP-Rule" id="MF_01217"/>
    </source>
</evidence>
<evidence type="ECO:0000255" key="2">
    <source>
        <dbReference type="PROSITE-ProRule" id="PRU00258"/>
    </source>
</evidence>
<dbReference type="EMBL" id="BX571856">
    <property type="protein sequence ID" value="CAG40210.1"/>
    <property type="molecule type" value="Genomic_DNA"/>
</dbReference>
<dbReference type="RefSeq" id="WP_000426914.1">
    <property type="nucleotide sequence ID" value="NC_002952.2"/>
</dbReference>
<dbReference type="SMR" id="Q6GHK3"/>
<dbReference type="KEGG" id="sar:SAR1208"/>
<dbReference type="HOGENOM" id="CLU_108696_5_1_9"/>
<dbReference type="UniPathway" id="UPA00094"/>
<dbReference type="Proteomes" id="UP000000596">
    <property type="component" value="Chromosome"/>
</dbReference>
<dbReference type="GO" id="GO:0005829">
    <property type="term" value="C:cytosol"/>
    <property type="evidence" value="ECO:0007669"/>
    <property type="project" value="TreeGrafter"/>
</dbReference>
<dbReference type="GO" id="GO:0016020">
    <property type="term" value="C:membrane"/>
    <property type="evidence" value="ECO:0007669"/>
    <property type="project" value="GOC"/>
</dbReference>
<dbReference type="GO" id="GO:0000035">
    <property type="term" value="F:acyl binding"/>
    <property type="evidence" value="ECO:0007669"/>
    <property type="project" value="TreeGrafter"/>
</dbReference>
<dbReference type="GO" id="GO:0000036">
    <property type="term" value="F:acyl carrier activity"/>
    <property type="evidence" value="ECO:0007669"/>
    <property type="project" value="UniProtKB-UniRule"/>
</dbReference>
<dbReference type="GO" id="GO:0009245">
    <property type="term" value="P:lipid A biosynthetic process"/>
    <property type="evidence" value="ECO:0007669"/>
    <property type="project" value="TreeGrafter"/>
</dbReference>
<dbReference type="FunFam" id="1.10.1200.10:FF:000001">
    <property type="entry name" value="Acyl carrier protein"/>
    <property type="match status" value="1"/>
</dbReference>
<dbReference type="Gene3D" id="1.10.1200.10">
    <property type="entry name" value="ACP-like"/>
    <property type="match status" value="1"/>
</dbReference>
<dbReference type="HAMAP" id="MF_01217">
    <property type="entry name" value="Acyl_carrier"/>
    <property type="match status" value="1"/>
</dbReference>
<dbReference type="InterPro" id="IPR003231">
    <property type="entry name" value="ACP"/>
</dbReference>
<dbReference type="InterPro" id="IPR036736">
    <property type="entry name" value="ACP-like_sf"/>
</dbReference>
<dbReference type="InterPro" id="IPR009081">
    <property type="entry name" value="PP-bd_ACP"/>
</dbReference>
<dbReference type="InterPro" id="IPR006162">
    <property type="entry name" value="Ppantetheine_attach_site"/>
</dbReference>
<dbReference type="NCBIfam" id="TIGR00517">
    <property type="entry name" value="acyl_carrier"/>
    <property type="match status" value="1"/>
</dbReference>
<dbReference type="NCBIfam" id="NF002148">
    <property type="entry name" value="PRK00982.1-2"/>
    <property type="match status" value="1"/>
</dbReference>
<dbReference type="NCBIfam" id="NF002150">
    <property type="entry name" value="PRK00982.1-4"/>
    <property type="match status" value="1"/>
</dbReference>
<dbReference type="NCBIfam" id="NF002151">
    <property type="entry name" value="PRK00982.1-5"/>
    <property type="match status" value="1"/>
</dbReference>
<dbReference type="PANTHER" id="PTHR20863">
    <property type="entry name" value="ACYL CARRIER PROTEIN"/>
    <property type="match status" value="1"/>
</dbReference>
<dbReference type="PANTHER" id="PTHR20863:SF76">
    <property type="entry name" value="CARRIER DOMAIN-CONTAINING PROTEIN"/>
    <property type="match status" value="1"/>
</dbReference>
<dbReference type="Pfam" id="PF00550">
    <property type="entry name" value="PP-binding"/>
    <property type="match status" value="1"/>
</dbReference>
<dbReference type="SUPFAM" id="SSF47336">
    <property type="entry name" value="ACP-like"/>
    <property type="match status" value="1"/>
</dbReference>
<dbReference type="PROSITE" id="PS50075">
    <property type="entry name" value="CARRIER"/>
    <property type="match status" value="1"/>
</dbReference>
<dbReference type="PROSITE" id="PS00012">
    <property type="entry name" value="PHOSPHOPANTETHEINE"/>
    <property type="match status" value="1"/>
</dbReference>
<proteinExistence type="inferred from homology"/>
<feature type="chain" id="PRO_0000180191" description="Acyl carrier protein">
    <location>
        <begin position="1"/>
        <end position="77"/>
    </location>
</feature>
<feature type="domain" description="Carrier" evidence="2">
    <location>
        <begin position="1"/>
        <end position="76"/>
    </location>
</feature>
<feature type="modified residue" description="O-(pantetheine 4'-phosphoryl)serine" evidence="2">
    <location>
        <position position="36"/>
    </location>
</feature>
<name>ACP_STAAR</name>
<reference key="1">
    <citation type="journal article" date="2004" name="Proc. Natl. Acad. Sci. U.S.A.">
        <title>Complete genomes of two clinical Staphylococcus aureus strains: evidence for the rapid evolution of virulence and drug resistance.</title>
        <authorList>
            <person name="Holden M.T.G."/>
            <person name="Feil E.J."/>
            <person name="Lindsay J.A."/>
            <person name="Peacock S.J."/>
            <person name="Day N.P.J."/>
            <person name="Enright M.C."/>
            <person name="Foster T.J."/>
            <person name="Moore C.E."/>
            <person name="Hurst L."/>
            <person name="Atkin R."/>
            <person name="Barron A."/>
            <person name="Bason N."/>
            <person name="Bentley S.D."/>
            <person name="Chillingworth C."/>
            <person name="Chillingworth T."/>
            <person name="Churcher C."/>
            <person name="Clark L."/>
            <person name="Corton C."/>
            <person name="Cronin A."/>
            <person name="Doggett J."/>
            <person name="Dowd L."/>
            <person name="Feltwell T."/>
            <person name="Hance Z."/>
            <person name="Harris B."/>
            <person name="Hauser H."/>
            <person name="Holroyd S."/>
            <person name="Jagels K."/>
            <person name="James K.D."/>
            <person name="Lennard N."/>
            <person name="Line A."/>
            <person name="Mayes R."/>
            <person name="Moule S."/>
            <person name="Mungall K."/>
            <person name="Ormond D."/>
            <person name="Quail M.A."/>
            <person name="Rabbinowitsch E."/>
            <person name="Rutherford K.M."/>
            <person name="Sanders M."/>
            <person name="Sharp S."/>
            <person name="Simmonds M."/>
            <person name="Stevens K."/>
            <person name="Whitehead S."/>
            <person name="Barrell B.G."/>
            <person name="Spratt B.G."/>
            <person name="Parkhill J."/>
        </authorList>
    </citation>
    <scope>NUCLEOTIDE SEQUENCE [LARGE SCALE GENOMIC DNA]</scope>
    <source>
        <strain>MRSA252</strain>
    </source>
</reference>
<gene>
    <name evidence="1" type="primary">acpP</name>
    <name type="ordered locus">SAR1208</name>
</gene>
<keyword id="KW-0963">Cytoplasm</keyword>
<keyword id="KW-0275">Fatty acid biosynthesis</keyword>
<keyword id="KW-0276">Fatty acid metabolism</keyword>
<keyword id="KW-0444">Lipid biosynthesis</keyword>
<keyword id="KW-0443">Lipid metabolism</keyword>
<keyword id="KW-0596">Phosphopantetheine</keyword>
<keyword id="KW-0597">Phosphoprotein</keyword>
<protein>
    <recommendedName>
        <fullName evidence="1">Acyl carrier protein</fullName>
        <shortName evidence="1">ACP</shortName>
    </recommendedName>
</protein>
<sequence length="77" mass="8549">MENFDKVKDIIVDRLGVDADKVTEDASFKDDLGADSLDIAELVMELEDEFGTEIPDEEAEKINTVGDAVKFINSLEK</sequence>